<comment type="function">
    <text evidence="3">Transfers mannosyl residues to the hydroxyl group of serine or threonine residues. The 4 members of the TMTC family are O-mannosyl-transferases dedicated primarily to the cadherin superfamily, each member seems to have a distinct role in decorating the cadherin domains with O-linked mannose glycans at specific regions. Also acts as O-mannosyl-transferase on other proteins such as PDIA3.</text>
</comment>
<comment type="catalytic activity">
    <reaction evidence="3">
        <text>a di-trans,poly-cis-dolichyl beta-D-mannosyl phosphate + L-seryl-[protein] = 3-O-(alpha-D-mannosyl)-L-seryl-[protein] + a di-trans,poly-cis-dolichyl phosphate + H(+)</text>
        <dbReference type="Rhea" id="RHEA:17377"/>
        <dbReference type="Rhea" id="RHEA-COMP:9863"/>
        <dbReference type="Rhea" id="RHEA-COMP:13546"/>
        <dbReference type="Rhea" id="RHEA-COMP:19498"/>
        <dbReference type="Rhea" id="RHEA-COMP:19501"/>
        <dbReference type="ChEBI" id="CHEBI:15378"/>
        <dbReference type="ChEBI" id="CHEBI:29999"/>
        <dbReference type="ChEBI" id="CHEBI:57683"/>
        <dbReference type="ChEBI" id="CHEBI:58211"/>
        <dbReference type="ChEBI" id="CHEBI:137321"/>
        <dbReference type="EC" id="2.4.1.109"/>
    </reaction>
    <physiologicalReaction direction="left-to-right" evidence="3">
        <dbReference type="Rhea" id="RHEA:17378"/>
    </physiologicalReaction>
</comment>
<comment type="catalytic activity">
    <reaction evidence="3">
        <text>a di-trans,poly-cis-dolichyl beta-D-mannosyl phosphate + L-threonyl-[protein] = 3-O-(alpha-D-mannosyl)-L-threonyl-[protein] + a di-trans,poly-cis-dolichyl phosphate + H(+)</text>
        <dbReference type="Rhea" id="RHEA:53396"/>
        <dbReference type="Rhea" id="RHEA-COMP:11060"/>
        <dbReference type="Rhea" id="RHEA-COMP:13547"/>
        <dbReference type="Rhea" id="RHEA-COMP:19498"/>
        <dbReference type="Rhea" id="RHEA-COMP:19501"/>
        <dbReference type="ChEBI" id="CHEBI:15378"/>
        <dbReference type="ChEBI" id="CHEBI:30013"/>
        <dbReference type="ChEBI" id="CHEBI:57683"/>
        <dbReference type="ChEBI" id="CHEBI:58211"/>
        <dbReference type="ChEBI" id="CHEBI:137323"/>
        <dbReference type="EC" id="2.4.1.109"/>
    </reaction>
    <physiologicalReaction direction="left-to-right" evidence="3">
        <dbReference type="Rhea" id="RHEA:53397"/>
    </physiologicalReaction>
</comment>
<comment type="pathway">
    <text evidence="3">Protein modification; protein glycosylation.</text>
</comment>
<comment type="subcellular location">
    <subcellularLocation>
        <location evidence="4">Membrane</location>
        <topology evidence="4">Multi-pass membrane protein</topology>
    </subcellularLocation>
    <subcellularLocation>
        <location evidence="4">Endoplasmic reticulum</location>
    </subcellularLocation>
</comment>
<comment type="similarity">
    <text evidence="4">Belongs to the TMTC family.</text>
</comment>
<comment type="sequence caution" evidence="4">
    <conflict type="erroneous initiation">
        <sequence resource="EMBL-CDS" id="BAC11102"/>
    </conflict>
    <text>Truncated N-terminus.</text>
</comment>
<sequence length="836" mass="94130">MIAELVSSALGLALYLNTLSADFCYDDSRAIKTNQDLLPETPWTHIFYNDFWGTLLTHSGSHKSYRPLCTLSFRLNHAIGGLNPWSYHLVNVLLHAAVTGLFTSFSKILLGDGYWTFMAGLMFASHPIHTEAVAGIVGRADVGASLFFLLSLLCYIKHCSTRGYSARTWGWFLGSGLCAGCSMLWKEQGVTVLAVSAVYDVFVFHRLKIKQILPTIYKRKNLSLFLSISLLIFWGSSLLGARLYWMGNKPPSFSNSDNPAADSDSLLTRTLTFFYLPTKNLWLLLCPDTLSFDWSMDAVPLLKTVCDWRNLHTVAFYTGLLLLAYYGLKSPSVDRECNGKTVTNGKQNANGHSCLSDVEYQNSETKSSFASKVENGIKNDVSQRTQLPSTENIVVLSLSLLIIPFVPATNLFFYVGFVIAERVLYIPSMGFCLLITVGARALYVKVQKRFLKSLIFYATATLIVFYGLKTAIRNGDWQNEEMLYRSGIKVNPAKAWGNLGNVLKSQSKISEAESAYRNALYYRSNMADMLYNLGLLLQENSRFAEALHYYKLAIGSRPTLASAYLNTGIILMNQGRTEEARRTFLKCSEIPDENLKDPHAHKSSVTSCLYNLGKLYHEQGHYEEALSVYKEAIQKMPRQFAPQSLYNMMGEAYMRLSKLPEAEHWYMESLRSKTDHIPAHLTYGKLLALTGRKSEAEKLFLKAIELDPTKGNCYMHYGQFLLEEARLIEAAEMAKKAAELDSTEFDVVFNAAHMLRQASLNEAAEKYYDLAARLRPNYPAALMNLGAILHLNGRLQKAEANYLRALQLKPDDVITQSNLRKLWNIMEKQGLKTSKT</sequence>
<reference key="1">
    <citation type="journal article" date="2004" name="Nat. Genet.">
        <title>Complete sequencing and characterization of 21,243 full-length human cDNAs.</title>
        <authorList>
            <person name="Ota T."/>
            <person name="Suzuki Y."/>
            <person name="Nishikawa T."/>
            <person name="Otsuki T."/>
            <person name="Sugiyama T."/>
            <person name="Irie R."/>
            <person name="Wakamatsu A."/>
            <person name="Hayashi K."/>
            <person name="Sato H."/>
            <person name="Nagai K."/>
            <person name="Kimura K."/>
            <person name="Makita H."/>
            <person name="Sekine M."/>
            <person name="Obayashi M."/>
            <person name="Nishi T."/>
            <person name="Shibahara T."/>
            <person name="Tanaka T."/>
            <person name="Ishii S."/>
            <person name="Yamamoto J."/>
            <person name="Saito K."/>
            <person name="Kawai Y."/>
            <person name="Isono Y."/>
            <person name="Nakamura Y."/>
            <person name="Nagahari K."/>
            <person name="Murakami K."/>
            <person name="Yasuda T."/>
            <person name="Iwayanagi T."/>
            <person name="Wagatsuma M."/>
            <person name="Shiratori A."/>
            <person name="Sudo H."/>
            <person name="Hosoiri T."/>
            <person name="Kaku Y."/>
            <person name="Kodaira H."/>
            <person name="Kondo H."/>
            <person name="Sugawara M."/>
            <person name="Takahashi M."/>
            <person name="Kanda K."/>
            <person name="Yokoi T."/>
            <person name="Furuya T."/>
            <person name="Kikkawa E."/>
            <person name="Omura Y."/>
            <person name="Abe K."/>
            <person name="Kamihara K."/>
            <person name="Katsuta N."/>
            <person name="Sato K."/>
            <person name="Tanikawa M."/>
            <person name="Yamazaki M."/>
            <person name="Ninomiya K."/>
            <person name="Ishibashi T."/>
            <person name="Yamashita H."/>
            <person name="Murakawa K."/>
            <person name="Fujimori K."/>
            <person name="Tanai H."/>
            <person name="Kimata M."/>
            <person name="Watanabe M."/>
            <person name="Hiraoka S."/>
            <person name="Chiba Y."/>
            <person name="Ishida S."/>
            <person name="Ono Y."/>
            <person name="Takiguchi S."/>
            <person name="Watanabe S."/>
            <person name="Yosida M."/>
            <person name="Hotuta T."/>
            <person name="Kusano J."/>
            <person name="Kanehori K."/>
            <person name="Takahashi-Fujii A."/>
            <person name="Hara H."/>
            <person name="Tanase T.-O."/>
            <person name="Nomura Y."/>
            <person name="Togiya S."/>
            <person name="Komai F."/>
            <person name="Hara R."/>
            <person name="Takeuchi K."/>
            <person name="Arita M."/>
            <person name="Imose N."/>
            <person name="Musashino K."/>
            <person name="Yuuki H."/>
            <person name="Oshima A."/>
            <person name="Sasaki N."/>
            <person name="Aotsuka S."/>
            <person name="Yoshikawa Y."/>
            <person name="Matsunawa H."/>
            <person name="Ichihara T."/>
            <person name="Shiohata N."/>
            <person name="Sano S."/>
            <person name="Moriya S."/>
            <person name="Momiyama H."/>
            <person name="Satoh N."/>
            <person name="Takami S."/>
            <person name="Terashima Y."/>
            <person name="Suzuki O."/>
            <person name="Nakagawa S."/>
            <person name="Senoh A."/>
            <person name="Mizoguchi H."/>
            <person name="Goto Y."/>
            <person name="Shimizu F."/>
            <person name="Wakebe H."/>
            <person name="Hishigaki H."/>
            <person name="Watanabe T."/>
            <person name="Sugiyama A."/>
            <person name="Takemoto M."/>
            <person name="Kawakami B."/>
            <person name="Yamazaki M."/>
            <person name="Watanabe K."/>
            <person name="Kumagai A."/>
            <person name="Itakura S."/>
            <person name="Fukuzumi Y."/>
            <person name="Fujimori Y."/>
            <person name="Komiyama M."/>
            <person name="Tashiro H."/>
            <person name="Tanigami A."/>
            <person name="Fujiwara T."/>
            <person name="Ono T."/>
            <person name="Yamada K."/>
            <person name="Fujii Y."/>
            <person name="Ozaki K."/>
            <person name="Hirao M."/>
            <person name="Ohmori Y."/>
            <person name="Kawabata A."/>
            <person name="Hikiji T."/>
            <person name="Kobatake N."/>
            <person name="Inagaki H."/>
            <person name="Ikema Y."/>
            <person name="Okamoto S."/>
            <person name="Okitani R."/>
            <person name="Kawakami T."/>
            <person name="Noguchi S."/>
            <person name="Itoh T."/>
            <person name="Shigeta K."/>
            <person name="Senba T."/>
            <person name="Matsumura K."/>
            <person name="Nakajima Y."/>
            <person name="Mizuno T."/>
            <person name="Morinaga M."/>
            <person name="Sasaki M."/>
            <person name="Togashi T."/>
            <person name="Oyama M."/>
            <person name="Hata H."/>
            <person name="Watanabe M."/>
            <person name="Komatsu T."/>
            <person name="Mizushima-Sugano J."/>
            <person name="Satoh T."/>
            <person name="Shirai Y."/>
            <person name="Takahashi Y."/>
            <person name="Nakagawa K."/>
            <person name="Okumura K."/>
            <person name="Nagase T."/>
            <person name="Nomura N."/>
            <person name="Kikuchi H."/>
            <person name="Masuho Y."/>
            <person name="Yamashita R."/>
            <person name="Nakai K."/>
            <person name="Yada T."/>
            <person name="Nakamura Y."/>
            <person name="Ohara O."/>
            <person name="Isogai T."/>
            <person name="Sugano S."/>
        </authorList>
    </citation>
    <scope>NUCLEOTIDE SEQUENCE [LARGE SCALE MRNA]</scope>
    <source>
        <tissue>Brain</tissue>
        <tissue>Embryo</tissue>
    </source>
</reference>
<reference key="2">
    <citation type="journal article" date="2007" name="BMC Genomics">
        <title>The full-ORF clone resource of the German cDNA consortium.</title>
        <authorList>
            <person name="Bechtel S."/>
            <person name="Rosenfelder H."/>
            <person name="Duda A."/>
            <person name="Schmidt C.P."/>
            <person name="Ernst U."/>
            <person name="Wellenreuther R."/>
            <person name="Mehrle A."/>
            <person name="Schuster C."/>
            <person name="Bahr A."/>
            <person name="Bloecker H."/>
            <person name="Heubner D."/>
            <person name="Hoerlein A."/>
            <person name="Michel G."/>
            <person name="Wedler H."/>
            <person name="Koehrer K."/>
            <person name="Ottenwaelder B."/>
            <person name="Poustka A."/>
            <person name="Wiemann S."/>
            <person name="Schupp I."/>
        </authorList>
    </citation>
    <scope>NUCLEOTIDE SEQUENCE [LARGE SCALE MRNA]</scope>
    <source>
        <tissue>Melanoma</tissue>
    </source>
</reference>
<reference key="3">
    <citation type="submission" date="2005-07" db="EMBL/GenBank/DDBJ databases">
        <authorList>
            <person name="Mural R.J."/>
            <person name="Istrail S."/>
            <person name="Sutton G.G."/>
            <person name="Florea L."/>
            <person name="Halpern A.L."/>
            <person name="Mobarry C.M."/>
            <person name="Lippert R."/>
            <person name="Walenz B."/>
            <person name="Shatkay H."/>
            <person name="Dew I."/>
            <person name="Miller J.R."/>
            <person name="Flanigan M.J."/>
            <person name="Edwards N.J."/>
            <person name="Bolanos R."/>
            <person name="Fasulo D."/>
            <person name="Halldorsson B.V."/>
            <person name="Hannenhalli S."/>
            <person name="Turner R."/>
            <person name="Yooseph S."/>
            <person name="Lu F."/>
            <person name="Nusskern D.R."/>
            <person name="Shue B.C."/>
            <person name="Zheng X.H."/>
            <person name="Zhong F."/>
            <person name="Delcher A.L."/>
            <person name="Huson D.H."/>
            <person name="Kravitz S.A."/>
            <person name="Mouchard L."/>
            <person name="Reinert K."/>
            <person name="Remington K.A."/>
            <person name="Clark A.G."/>
            <person name="Waterman M.S."/>
            <person name="Eichler E.E."/>
            <person name="Adams M.D."/>
            <person name="Hunkapiller M.W."/>
            <person name="Myers E.W."/>
            <person name="Venter J.C."/>
        </authorList>
    </citation>
    <scope>NUCLEOTIDE SEQUENCE [LARGE SCALE GENOMIC DNA]</scope>
</reference>
<reference key="4">
    <citation type="journal article" date="2004" name="Genome Res.">
        <title>The status, quality, and expansion of the NIH full-length cDNA project: the Mammalian Gene Collection (MGC).</title>
        <authorList>
            <consortium name="The MGC Project Team"/>
        </authorList>
    </citation>
    <scope>NUCLEOTIDE SEQUENCE [LARGE SCALE MRNA]</scope>
    <source>
        <tissue>Brain</tissue>
    </source>
</reference>
<reference key="5">
    <citation type="journal article" date="2017" name="Proc. Natl. Acad. Sci. U.S.A.">
        <title>Discovery of an O-mannosylation pathway selectively serving cadherins and protocadherins.</title>
        <authorList>
            <person name="Larsen I.S.B."/>
            <person name="Narimatsu Y."/>
            <person name="Joshi H.J."/>
            <person name="Siukstaite L."/>
            <person name="Harrison O.J."/>
            <person name="Brasch J."/>
            <person name="Goodman K.M."/>
            <person name="Hansen L."/>
            <person name="Shapiro L."/>
            <person name="Honig B."/>
            <person name="Vakhrushev S.Y."/>
            <person name="Clausen H."/>
            <person name="Halim A."/>
        </authorList>
    </citation>
    <scope>FUNCTION</scope>
    <scope>CATALYTIC ACTIVITY</scope>
    <scope>PATHWAY</scope>
</reference>
<name>TMTC2_HUMAN</name>
<keyword id="KW-0256">Endoplasmic reticulum</keyword>
<keyword id="KW-0472">Membrane</keyword>
<keyword id="KW-1267">Proteomics identification</keyword>
<keyword id="KW-1185">Reference proteome</keyword>
<keyword id="KW-0677">Repeat</keyword>
<keyword id="KW-0802">TPR repeat</keyword>
<keyword id="KW-0808">Transferase</keyword>
<keyword id="KW-0812">Transmembrane</keyword>
<keyword id="KW-1133">Transmembrane helix</keyword>
<feature type="chain" id="PRO_0000280290" description="Protein O-mannosyl-transferase TMTC2">
    <location>
        <begin position="1"/>
        <end position="836"/>
    </location>
</feature>
<feature type="transmembrane region" description="Helical" evidence="1">
    <location>
        <begin position="1"/>
        <end position="21"/>
    </location>
</feature>
<feature type="topological domain" description="Extracellular" evidence="4">
    <location>
        <begin position="22"/>
        <end position="84"/>
    </location>
</feature>
<feature type="transmembrane region" description="Helical" evidence="1">
    <location>
        <begin position="85"/>
        <end position="105"/>
    </location>
</feature>
<feature type="topological domain" description="Cytoplasmic" evidence="4">
    <location>
        <begin position="106"/>
        <end position="107"/>
    </location>
</feature>
<feature type="transmembrane region" description="Helical" evidence="1">
    <location>
        <begin position="108"/>
        <end position="128"/>
    </location>
</feature>
<feature type="topological domain" description="Extracellular" evidence="4">
    <location>
        <begin position="129"/>
        <end position="132"/>
    </location>
</feature>
<feature type="transmembrane region" description="Helical" evidence="1">
    <location>
        <begin position="133"/>
        <end position="153"/>
    </location>
</feature>
<feature type="topological domain" description="Cytoplasmic" evidence="4">
    <location>
        <begin position="154"/>
        <end position="162"/>
    </location>
</feature>
<feature type="transmembrane region" description="Helical" evidence="1">
    <location>
        <begin position="163"/>
        <end position="184"/>
    </location>
</feature>
<feature type="transmembrane region" description="Helical" evidence="1">
    <location>
        <begin position="185"/>
        <end position="204"/>
    </location>
</feature>
<feature type="topological domain" description="Cytoplasmic" evidence="4">
    <location>
        <begin position="205"/>
        <end position="220"/>
    </location>
</feature>
<feature type="transmembrane region" description="Helical" evidence="1">
    <location>
        <begin position="221"/>
        <end position="241"/>
    </location>
</feature>
<feature type="topological domain" description="Extracellular" evidence="4">
    <location>
        <begin position="242"/>
        <end position="312"/>
    </location>
</feature>
<feature type="transmembrane region" description="Helical" evidence="1">
    <location>
        <begin position="313"/>
        <end position="333"/>
    </location>
</feature>
<feature type="topological domain" description="Cytoplasmic" evidence="4">
    <location>
        <begin position="334"/>
        <end position="399"/>
    </location>
</feature>
<feature type="transmembrane region" description="Helical" evidence="1">
    <location>
        <begin position="400"/>
        <end position="420"/>
    </location>
</feature>
<feature type="topological domain" description="Extracellular" evidence="4">
    <location>
        <begin position="421"/>
        <end position="422"/>
    </location>
</feature>
<feature type="transmembrane region" description="Helical" evidence="1">
    <location>
        <begin position="423"/>
        <end position="443"/>
    </location>
</feature>
<feature type="topological domain" description="Cytoplasmic" evidence="4">
    <location>
        <begin position="444"/>
        <end position="449"/>
    </location>
</feature>
<feature type="transmembrane region" description="Helical" evidence="1">
    <location>
        <begin position="450"/>
        <end position="470"/>
    </location>
</feature>
<feature type="topological domain" description="Extracellular" evidence="4">
    <location>
        <begin position="471"/>
        <end position="836"/>
    </location>
</feature>
<feature type="repeat" description="TPR 1" evidence="2">
    <location>
        <begin position="493"/>
        <end position="526"/>
    </location>
</feature>
<feature type="repeat" description="TPR 2" evidence="2">
    <location>
        <begin position="527"/>
        <end position="560"/>
    </location>
</feature>
<feature type="repeat" description="TPR 3" evidence="2">
    <location>
        <begin position="561"/>
        <end position="594"/>
    </location>
</feature>
<feature type="repeat" description="TPR 4" evidence="2">
    <location>
        <begin position="606"/>
        <end position="639"/>
    </location>
</feature>
<feature type="repeat" description="TPR 5" evidence="2">
    <location>
        <begin position="643"/>
        <end position="676"/>
    </location>
</feature>
<feature type="repeat" description="TPR 6" evidence="2">
    <location>
        <begin position="677"/>
        <end position="710"/>
    </location>
</feature>
<feature type="repeat" description="TPR 7" evidence="2">
    <location>
        <begin position="711"/>
        <end position="744"/>
    </location>
</feature>
<feature type="repeat" description="TPR 8" evidence="2">
    <location>
        <begin position="745"/>
        <end position="778"/>
    </location>
</feature>
<feature type="repeat" description="TPR 9" evidence="2">
    <location>
        <begin position="779"/>
        <end position="812"/>
    </location>
</feature>
<feature type="sequence variant" id="VAR_031113" description="In dbSNP:rs1201791.">
    <original>A</original>
    <variation>T</variation>
    <location>
        <position position="315"/>
    </location>
</feature>
<feature type="sequence variant" id="VAR_031114" description="In dbSNP:rs17010106.">
    <original>Y</original>
    <variation>S</variation>
    <location>
        <position position="443"/>
    </location>
</feature>
<feature type="sequence variant" id="VAR_053852" description="In dbSNP:rs428398.">
    <original>D</original>
    <variation>Y</variation>
    <location>
        <position position="741"/>
    </location>
</feature>
<protein>
    <recommendedName>
        <fullName evidence="4">Protein O-mannosyl-transferase TMTC2</fullName>
        <ecNumber evidence="3">2.4.1.109</ecNumber>
    </recommendedName>
    <alternativeName>
        <fullName evidence="5">Transmembrane O-mannosyltransferase targeting cadherins 2</fullName>
    </alternativeName>
    <alternativeName>
        <fullName evidence="5">Transmembrane and tetratricopeptide repeat-containing 2</fullName>
    </alternativeName>
</protein>
<accession>Q8N394</accession>
<accession>B2RCU7</accession>
<accession>Q8N2K8</accession>
<dbReference type="EC" id="2.4.1.109" evidence="3"/>
<dbReference type="EMBL" id="AK074634">
    <property type="protein sequence ID" value="BAC11102.1"/>
    <property type="status" value="ALT_INIT"/>
    <property type="molecule type" value="mRNA"/>
</dbReference>
<dbReference type="EMBL" id="AK315285">
    <property type="protein sequence ID" value="BAG37694.1"/>
    <property type="molecule type" value="mRNA"/>
</dbReference>
<dbReference type="EMBL" id="AL834509">
    <property type="protein sequence ID" value="CAD39165.1"/>
    <property type="molecule type" value="mRNA"/>
</dbReference>
<dbReference type="EMBL" id="CH471054">
    <property type="protein sequence ID" value="EAW97384.1"/>
    <property type="molecule type" value="Genomic_DNA"/>
</dbReference>
<dbReference type="EMBL" id="BC093852">
    <property type="protein sequence ID" value="AAH93852.1"/>
    <property type="molecule type" value="mRNA"/>
</dbReference>
<dbReference type="EMBL" id="BC093854">
    <property type="protein sequence ID" value="AAH93854.1"/>
    <property type="molecule type" value="mRNA"/>
</dbReference>
<dbReference type="CCDS" id="CCDS9025.1"/>
<dbReference type="RefSeq" id="NP_001307250.1">
    <property type="nucleotide sequence ID" value="NM_001320321.1"/>
</dbReference>
<dbReference type="RefSeq" id="NP_689801.1">
    <property type="nucleotide sequence ID" value="NM_152588.3"/>
</dbReference>
<dbReference type="SMR" id="Q8N394"/>
<dbReference type="BioGRID" id="127753">
    <property type="interactions" value="85"/>
</dbReference>
<dbReference type="FunCoup" id="Q8N394">
    <property type="interactions" value="864"/>
</dbReference>
<dbReference type="IntAct" id="Q8N394">
    <property type="interactions" value="12"/>
</dbReference>
<dbReference type="MINT" id="Q8N394"/>
<dbReference type="STRING" id="9606.ENSP00000322300"/>
<dbReference type="GlyCosmos" id="Q8N394">
    <property type="glycosylation" value="1 site, No reported glycans"/>
</dbReference>
<dbReference type="GlyGen" id="Q8N394">
    <property type="glycosylation" value="1 site, 1 O-linked glycan (1 site)"/>
</dbReference>
<dbReference type="iPTMnet" id="Q8N394"/>
<dbReference type="PhosphoSitePlus" id="Q8N394"/>
<dbReference type="BioMuta" id="TMTC2"/>
<dbReference type="DMDM" id="74759843"/>
<dbReference type="jPOST" id="Q8N394"/>
<dbReference type="MassIVE" id="Q8N394"/>
<dbReference type="PaxDb" id="9606-ENSP00000322300"/>
<dbReference type="PeptideAtlas" id="Q8N394"/>
<dbReference type="ProteomicsDB" id="71782"/>
<dbReference type="Antibodypedia" id="29839">
    <property type="antibodies" value="54 antibodies from 17 providers"/>
</dbReference>
<dbReference type="DNASU" id="160335"/>
<dbReference type="Ensembl" id="ENST00000321196.8">
    <property type="protein sequence ID" value="ENSP00000322300.3"/>
    <property type="gene ID" value="ENSG00000179104.9"/>
</dbReference>
<dbReference type="GeneID" id="160335"/>
<dbReference type="KEGG" id="hsa:160335"/>
<dbReference type="MANE-Select" id="ENST00000321196.8">
    <property type="protein sequence ID" value="ENSP00000322300.3"/>
    <property type="RefSeq nucleotide sequence ID" value="NM_152588.3"/>
    <property type="RefSeq protein sequence ID" value="NP_689801.1"/>
</dbReference>
<dbReference type="UCSC" id="uc001szt.5">
    <property type="organism name" value="human"/>
</dbReference>
<dbReference type="AGR" id="HGNC:25440"/>
<dbReference type="CTD" id="160335"/>
<dbReference type="DisGeNET" id="160335"/>
<dbReference type="GeneCards" id="TMTC2"/>
<dbReference type="HGNC" id="HGNC:25440">
    <property type="gene designation" value="TMTC2"/>
</dbReference>
<dbReference type="HPA" id="ENSG00000179104">
    <property type="expression patterns" value="Low tissue specificity"/>
</dbReference>
<dbReference type="MIM" id="615856">
    <property type="type" value="gene"/>
</dbReference>
<dbReference type="neXtProt" id="NX_Q8N394"/>
<dbReference type="OpenTargets" id="ENSG00000179104"/>
<dbReference type="PharmGKB" id="PA142670719"/>
<dbReference type="VEuPathDB" id="HostDB:ENSG00000179104"/>
<dbReference type="eggNOG" id="KOG1124">
    <property type="taxonomic scope" value="Eukaryota"/>
</dbReference>
<dbReference type="GeneTree" id="ENSGT00940000156144"/>
<dbReference type="HOGENOM" id="CLU_011615_4_0_1"/>
<dbReference type="InParanoid" id="Q8N394"/>
<dbReference type="OMA" id="TQIFYND"/>
<dbReference type="OrthoDB" id="1658288at2759"/>
<dbReference type="PAN-GO" id="Q8N394">
    <property type="GO annotations" value="3 GO annotations based on evolutionary models"/>
</dbReference>
<dbReference type="PhylomeDB" id="Q8N394"/>
<dbReference type="TreeFam" id="TF328339"/>
<dbReference type="PathwayCommons" id="Q8N394"/>
<dbReference type="SignaLink" id="Q8N394"/>
<dbReference type="UniPathway" id="UPA00378"/>
<dbReference type="BioGRID-ORCS" id="160335">
    <property type="hits" value="9 hits in 1157 CRISPR screens"/>
</dbReference>
<dbReference type="ChiTaRS" id="TMTC2">
    <property type="organism name" value="human"/>
</dbReference>
<dbReference type="GeneWiki" id="TMTC2"/>
<dbReference type="GenomeRNAi" id="160335"/>
<dbReference type="Pharos" id="Q8N394">
    <property type="development level" value="Tbio"/>
</dbReference>
<dbReference type="PRO" id="PR:Q8N394"/>
<dbReference type="Proteomes" id="UP000005640">
    <property type="component" value="Chromosome 12"/>
</dbReference>
<dbReference type="RNAct" id="Q8N394">
    <property type="molecule type" value="protein"/>
</dbReference>
<dbReference type="Bgee" id="ENSG00000179104">
    <property type="expression patterns" value="Expressed in ventricular zone and 171 other cell types or tissues"/>
</dbReference>
<dbReference type="ExpressionAtlas" id="Q8N394">
    <property type="expression patterns" value="baseline and differential"/>
</dbReference>
<dbReference type="GO" id="GO:0005783">
    <property type="term" value="C:endoplasmic reticulum"/>
    <property type="evidence" value="ECO:0000314"/>
    <property type="project" value="LIFEdb"/>
</dbReference>
<dbReference type="GO" id="GO:0005789">
    <property type="term" value="C:endoplasmic reticulum membrane"/>
    <property type="evidence" value="ECO:0000314"/>
    <property type="project" value="UniProtKB"/>
</dbReference>
<dbReference type="GO" id="GO:0004169">
    <property type="term" value="F:dolichyl-phosphate-mannose-protein mannosyltransferase activity"/>
    <property type="evidence" value="ECO:0000315"/>
    <property type="project" value="UniProtKB"/>
</dbReference>
<dbReference type="GO" id="GO:0000030">
    <property type="term" value="F:mannosyltransferase activity"/>
    <property type="evidence" value="ECO:0000318"/>
    <property type="project" value="GO_Central"/>
</dbReference>
<dbReference type="GO" id="GO:0055074">
    <property type="term" value="P:calcium ion homeostasis"/>
    <property type="evidence" value="ECO:0000315"/>
    <property type="project" value="UniProtKB"/>
</dbReference>
<dbReference type="GO" id="GO:0035269">
    <property type="term" value="P:protein O-linked mannosylation"/>
    <property type="evidence" value="ECO:0000315"/>
    <property type="project" value="UniProtKB"/>
</dbReference>
<dbReference type="FunFam" id="1.25.40.10:FF:000130">
    <property type="entry name" value="Transmembrane and tetratricopeptide repeat containing 2"/>
    <property type="match status" value="1"/>
</dbReference>
<dbReference type="FunFam" id="1.25.40.10:FF:000153">
    <property type="entry name" value="Transmembrane and tetratricopeptide repeat containing 2"/>
    <property type="match status" value="1"/>
</dbReference>
<dbReference type="FunFam" id="1.25.40.10:FF:000190">
    <property type="entry name" value="Transmembrane and TPR repeat-containing protein 2"/>
    <property type="match status" value="1"/>
</dbReference>
<dbReference type="Gene3D" id="1.25.40.10">
    <property type="entry name" value="Tetratricopeptide repeat domain"/>
    <property type="match status" value="3"/>
</dbReference>
<dbReference type="InterPro" id="IPR013618">
    <property type="entry name" value="TMTC_DUF1736"/>
</dbReference>
<dbReference type="InterPro" id="IPR052384">
    <property type="entry name" value="TMTC_O-mannosyltransferase"/>
</dbReference>
<dbReference type="InterPro" id="IPR011990">
    <property type="entry name" value="TPR-like_helical_dom_sf"/>
</dbReference>
<dbReference type="InterPro" id="IPR019734">
    <property type="entry name" value="TPR_rpt"/>
</dbReference>
<dbReference type="PANTHER" id="PTHR44216">
    <property type="entry name" value="PROTEIN O-MANNOSYL-TRANSFERASE TMTC2"/>
    <property type="match status" value="1"/>
</dbReference>
<dbReference type="PANTHER" id="PTHR44216:SF3">
    <property type="entry name" value="PROTEIN O-MANNOSYL-TRANSFERASE TMTC2"/>
    <property type="match status" value="1"/>
</dbReference>
<dbReference type="Pfam" id="PF08409">
    <property type="entry name" value="TMTC_DUF1736"/>
    <property type="match status" value="1"/>
</dbReference>
<dbReference type="Pfam" id="PF00515">
    <property type="entry name" value="TPR_1"/>
    <property type="match status" value="1"/>
</dbReference>
<dbReference type="Pfam" id="PF13424">
    <property type="entry name" value="TPR_12"/>
    <property type="match status" value="1"/>
</dbReference>
<dbReference type="Pfam" id="PF13432">
    <property type="entry name" value="TPR_16"/>
    <property type="match status" value="1"/>
</dbReference>
<dbReference type="Pfam" id="PF13181">
    <property type="entry name" value="TPR_8"/>
    <property type="match status" value="1"/>
</dbReference>
<dbReference type="SMART" id="SM00028">
    <property type="entry name" value="TPR"/>
    <property type="match status" value="8"/>
</dbReference>
<dbReference type="SUPFAM" id="SSF48452">
    <property type="entry name" value="TPR-like"/>
    <property type="match status" value="2"/>
</dbReference>
<dbReference type="PROSITE" id="PS50005">
    <property type="entry name" value="TPR"/>
    <property type="match status" value="9"/>
</dbReference>
<dbReference type="PROSITE" id="PS50293">
    <property type="entry name" value="TPR_REGION"/>
    <property type="match status" value="1"/>
</dbReference>
<evidence type="ECO:0000255" key="1"/>
<evidence type="ECO:0000255" key="2">
    <source>
        <dbReference type="PROSITE-ProRule" id="PRU00339"/>
    </source>
</evidence>
<evidence type="ECO:0000269" key="3">
    <source>
    </source>
</evidence>
<evidence type="ECO:0000305" key="4"/>
<evidence type="ECO:0000312" key="5">
    <source>
        <dbReference type="HGNC" id="HGNC:25440"/>
    </source>
</evidence>
<gene>
    <name evidence="5" type="primary">TMTC2</name>
</gene>
<organism>
    <name type="scientific">Homo sapiens</name>
    <name type="common">Human</name>
    <dbReference type="NCBI Taxonomy" id="9606"/>
    <lineage>
        <taxon>Eukaryota</taxon>
        <taxon>Metazoa</taxon>
        <taxon>Chordata</taxon>
        <taxon>Craniata</taxon>
        <taxon>Vertebrata</taxon>
        <taxon>Euteleostomi</taxon>
        <taxon>Mammalia</taxon>
        <taxon>Eutheria</taxon>
        <taxon>Euarchontoglires</taxon>
        <taxon>Primates</taxon>
        <taxon>Haplorrhini</taxon>
        <taxon>Catarrhini</taxon>
        <taxon>Hominidae</taxon>
        <taxon>Homo</taxon>
    </lineage>
</organism>
<proteinExistence type="evidence at protein level"/>